<protein>
    <recommendedName>
        <fullName evidence="1">DNA mismatch repair protein MutH</fullName>
    </recommendedName>
    <alternativeName>
        <fullName evidence="1">Methyl-directed mismatch repair protein</fullName>
    </alternativeName>
</protein>
<keyword id="KW-0963">Cytoplasm</keyword>
<keyword id="KW-0227">DNA damage</keyword>
<keyword id="KW-0234">DNA repair</keyword>
<keyword id="KW-0255">Endonuclease</keyword>
<keyword id="KW-0378">Hydrolase</keyword>
<keyword id="KW-0540">Nuclease</keyword>
<proteinExistence type="inferred from homology"/>
<evidence type="ECO:0000255" key="1">
    <source>
        <dbReference type="HAMAP-Rule" id="MF_00759"/>
    </source>
</evidence>
<sequence length="229" mass="25527">MSQPRPLLSPPETEEQLLAQAQQLSGYTLGELAALVGLVTPENLKRDKGWIGVLLEIWLGASAGSKPEQDFAALGVELKTIPVDSLGRPLETTFVCVAPLTGNSGVTWETSHVRHKLKRVLWIPVEGERSIPLAQRRVGSPLLWSPNEEEDRQLREDWEELMDMIVLGQVERITARHGEYLQIRPKAANAKALTEAIGARGERILTLPRGFYLKKNFTSALLARHFLIQ</sequence>
<accession>C4ZZY4</accession>
<reference key="1">
    <citation type="journal article" date="2009" name="J. Bacteriol.">
        <title>Genomic sequencing reveals regulatory mutations and recombinational events in the widely used MC4100 lineage of Escherichia coli K-12.</title>
        <authorList>
            <person name="Ferenci T."/>
            <person name="Zhou Z."/>
            <person name="Betteridge T."/>
            <person name="Ren Y."/>
            <person name="Liu Y."/>
            <person name="Feng L."/>
            <person name="Reeves P.R."/>
            <person name="Wang L."/>
        </authorList>
    </citation>
    <scope>NUCLEOTIDE SEQUENCE [LARGE SCALE GENOMIC DNA]</scope>
    <source>
        <strain>K12 / MC4100 / BW2952</strain>
    </source>
</reference>
<gene>
    <name evidence="1" type="primary">mutH</name>
    <name type="ordered locus">BWG_2567</name>
</gene>
<feature type="chain" id="PRO_1000212878" description="DNA mismatch repair protein MutH">
    <location>
        <begin position="1"/>
        <end position="229"/>
    </location>
</feature>
<comment type="function">
    <text evidence="1">Sequence-specific endonuclease that cleaves unmethylated GATC sequences. It is involved in DNA mismatch repair.</text>
</comment>
<comment type="subcellular location">
    <subcellularLocation>
        <location evidence="1">Cytoplasm</location>
    </subcellularLocation>
</comment>
<comment type="similarity">
    <text evidence="1">Belongs to the MutH family.</text>
</comment>
<dbReference type="EMBL" id="CP001396">
    <property type="protein sequence ID" value="ACR63764.1"/>
    <property type="molecule type" value="Genomic_DNA"/>
</dbReference>
<dbReference type="RefSeq" id="WP_000082201.1">
    <property type="nucleotide sequence ID" value="NC_012759.1"/>
</dbReference>
<dbReference type="SMR" id="C4ZZY4"/>
<dbReference type="KEGG" id="ebw:BWG_2567"/>
<dbReference type="HOGENOM" id="CLU_086669_0_0_6"/>
<dbReference type="GO" id="GO:0005737">
    <property type="term" value="C:cytoplasm"/>
    <property type="evidence" value="ECO:0007669"/>
    <property type="project" value="UniProtKB-SubCell"/>
</dbReference>
<dbReference type="GO" id="GO:0003677">
    <property type="term" value="F:DNA binding"/>
    <property type="evidence" value="ECO:0007669"/>
    <property type="project" value="InterPro"/>
</dbReference>
<dbReference type="GO" id="GO:0004519">
    <property type="term" value="F:endonuclease activity"/>
    <property type="evidence" value="ECO:0007669"/>
    <property type="project" value="UniProtKB-UniRule"/>
</dbReference>
<dbReference type="GO" id="GO:0006304">
    <property type="term" value="P:DNA modification"/>
    <property type="evidence" value="ECO:0007669"/>
    <property type="project" value="InterPro"/>
</dbReference>
<dbReference type="GO" id="GO:0006298">
    <property type="term" value="P:mismatch repair"/>
    <property type="evidence" value="ECO:0007669"/>
    <property type="project" value="UniProtKB-UniRule"/>
</dbReference>
<dbReference type="CDD" id="cd00583">
    <property type="entry name" value="MutH-like"/>
    <property type="match status" value="1"/>
</dbReference>
<dbReference type="FunFam" id="3.40.600.10:FF:000001">
    <property type="entry name" value="DNA mismatch repair protein MutH"/>
    <property type="match status" value="1"/>
</dbReference>
<dbReference type="Gene3D" id="3.40.600.10">
    <property type="entry name" value="DNA mismatch repair MutH/Restriction endonuclease, type II"/>
    <property type="match status" value="1"/>
</dbReference>
<dbReference type="HAMAP" id="MF_00759">
    <property type="entry name" value="MutH"/>
    <property type="match status" value="1"/>
</dbReference>
<dbReference type="InterPro" id="IPR004230">
    <property type="entry name" value="DNA_mismatch_repair_MutH"/>
</dbReference>
<dbReference type="InterPro" id="IPR011337">
    <property type="entry name" value="DNA_rep_MutH/RE_typeII_Sau3AI"/>
</dbReference>
<dbReference type="InterPro" id="IPR037057">
    <property type="entry name" value="DNA_rep_MutH/T2_RE_sf"/>
</dbReference>
<dbReference type="InterPro" id="IPR011335">
    <property type="entry name" value="Restrct_endonuc-II-like"/>
</dbReference>
<dbReference type="NCBIfam" id="TIGR02248">
    <property type="entry name" value="mutH_TIGR"/>
    <property type="match status" value="1"/>
</dbReference>
<dbReference type="NCBIfam" id="NF003458">
    <property type="entry name" value="PRK05070.1"/>
    <property type="match status" value="1"/>
</dbReference>
<dbReference type="Pfam" id="PF02976">
    <property type="entry name" value="MutH"/>
    <property type="match status" value="1"/>
</dbReference>
<dbReference type="SMART" id="SM00927">
    <property type="entry name" value="MutH"/>
    <property type="match status" value="1"/>
</dbReference>
<dbReference type="SUPFAM" id="SSF52980">
    <property type="entry name" value="Restriction endonuclease-like"/>
    <property type="match status" value="1"/>
</dbReference>
<organism>
    <name type="scientific">Escherichia coli (strain K12 / MC4100 / BW2952)</name>
    <dbReference type="NCBI Taxonomy" id="595496"/>
    <lineage>
        <taxon>Bacteria</taxon>
        <taxon>Pseudomonadati</taxon>
        <taxon>Pseudomonadota</taxon>
        <taxon>Gammaproteobacteria</taxon>
        <taxon>Enterobacterales</taxon>
        <taxon>Enterobacteriaceae</taxon>
        <taxon>Escherichia</taxon>
    </lineage>
</organism>
<name>MUTH_ECOBW</name>